<gene>
    <name evidence="1" type="primary">ilvC</name>
    <name type="ordered locus">Caul_3381</name>
</gene>
<name>ILVC_CAUSK</name>
<sequence length="339" mass="36656">MRVYYDRDADLARILDKKIAIVGYGSQGHAHALNLRDSGATNVAVALRAGSPTAKKAQGEGLKVMTVAEAAAWADLLMILAPDEHQAAIYKNDIAPNIRDGAALLFAHGLNVHFGLIEPKDTIDVLMVAPKGPGHTVRGEYQKGGGVPCLIAVHHNATGNALDLGLAYASAIGGGRSGIIETNFREECETDLFGEQAVLCGGTVDLIRCGFEVLVEAGYAPEMAYFECLHELKLIVDLIYEGGIANMNYSISNTAEYGEYVTGPRIVTAETKAEMKRVLEDIQSGKFVRDFMLENAVGQPSFKATRRRASEHQIEEVGARLRGMMPWIAKNKLVDVTKN</sequence>
<evidence type="ECO:0000255" key="1">
    <source>
        <dbReference type="HAMAP-Rule" id="MF_00435"/>
    </source>
</evidence>
<evidence type="ECO:0000255" key="2">
    <source>
        <dbReference type="PROSITE-ProRule" id="PRU01197"/>
    </source>
</evidence>
<evidence type="ECO:0000255" key="3">
    <source>
        <dbReference type="PROSITE-ProRule" id="PRU01198"/>
    </source>
</evidence>
<reference key="1">
    <citation type="submission" date="2008-01" db="EMBL/GenBank/DDBJ databases">
        <title>Complete sequence of chromosome of Caulobacter sp. K31.</title>
        <authorList>
            <consortium name="US DOE Joint Genome Institute"/>
            <person name="Copeland A."/>
            <person name="Lucas S."/>
            <person name="Lapidus A."/>
            <person name="Barry K."/>
            <person name="Glavina del Rio T."/>
            <person name="Dalin E."/>
            <person name="Tice H."/>
            <person name="Pitluck S."/>
            <person name="Bruce D."/>
            <person name="Goodwin L."/>
            <person name="Thompson L.S."/>
            <person name="Brettin T."/>
            <person name="Detter J.C."/>
            <person name="Han C."/>
            <person name="Schmutz J."/>
            <person name="Larimer F."/>
            <person name="Land M."/>
            <person name="Hauser L."/>
            <person name="Kyrpides N."/>
            <person name="Kim E."/>
            <person name="Stephens C."/>
            <person name="Richardson P."/>
        </authorList>
    </citation>
    <scope>NUCLEOTIDE SEQUENCE [LARGE SCALE GENOMIC DNA]</scope>
    <source>
        <strain>K31</strain>
    </source>
</reference>
<keyword id="KW-0028">Amino-acid biosynthesis</keyword>
<keyword id="KW-0100">Branched-chain amino acid biosynthesis</keyword>
<keyword id="KW-0460">Magnesium</keyword>
<keyword id="KW-0479">Metal-binding</keyword>
<keyword id="KW-0521">NADP</keyword>
<keyword id="KW-0560">Oxidoreductase</keyword>
<protein>
    <recommendedName>
        <fullName evidence="1">Ketol-acid reductoisomerase (NADP(+))</fullName>
        <shortName evidence="1">KARI</shortName>
        <ecNumber evidence="1">1.1.1.86</ecNumber>
    </recommendedName>
    <alternativeName>
        <fullName evidence="1">Acetohydroxy-acid isomeroreductase</fullName>
        <shortName evidence="1">AHIR</shortName>
    </alternativeName>
    <alternativeName>
        <fullName evidence="1">Alpha-keto-beta-hydroxylacyl reductoisomerase</fullName>
    </alternativeName>
    <alternativeName>
        <fullName evidence="1">Ketol-acid reductoisomerase type 1</fullName>
    </alternativeName>
    <alternativeName>
        <fullName evidence="1">Ketol-acid reductoisomerase type I</fullName>
    </alternativeName>
</protein>
<accession>B0T4Y1</accession>
<feature type="chain" id="PRO_1000080621" description="Ketol-acid reductoisomerase (NADP(+))">
    <location>
        <begin position="1"/>
        <end position="339"/>
    </location>
</feature>
<feature type="domain" description="KARI N-terminal Rossmann" evidence="2">
    <location>
        <begin position="1"/>
        <end position="182"/>
    </location>
</feature>
<feature type="domain" description="KARI C-terminal knotted" evidence="3">
    <location>
        <begin position="183"/>
        <end position="328"/>
    </location>
</feature>
<feature type="active site" evidence="1">
    <location>
        <position position="108"/>
    </location>
</feature>
<feature type="binding site" evidence="1">
    <location>
        <begin position="24"/>
        <end position="27"/>
    </location>
    <ligand>
        <name>NADP(+)</name>
        <dbReference type="ChEBI" id="CHEBI:58349"/>
    </ligand>
</feature>
<feature type="binding site" evidence="1">
    <location>
        <position position="48"/>
    </location>
    <ligand>
        <name>NADP(+)</name>
        <dbReference type="ChEBI" id="CHEBI:58349"/>
    </ligand>
</feature>
<feature type="binding site" evidence="1">
    <location>
        <position position="51"/>
    </location>
    <ligand>
        <name>NADP(+)</name>
        <dbReference type="ChEBI" id="CHEBI:58349"/>
    </ligand>
</feature>
<feature type="binding site" evidence="1">
    <location>
        <position position="53"/>
    </location>
    <ligand>
        <name>NADP(+)</name>
        <dbReference type="ChEBI" id="CHEBI:58349"/>
    </ligand>
</feature>
<feature type="binding site" evidence="1">
    <location>
        <begin position="83"/>
        <end position="86"/>
    </location>
    <ligand>
        <name>NADP(+)</name>
        <dbReference type="ChEBI" id="CHEBI:58349"/>
    </ligand>
</feature>
<feature type="binding site" evidence="1">
    <location>
        <position position="134"/>
    </location>
    <ligand>
        <name>NADP(+)</name>
        <dbReference type="ChEBI" id="CHEBI:58349"/>
    </ligand>
</feature>
<feature type="binding site" evidence="1">
    <location>
        <position position="191"/>
    </location>
    <ligand>
        <name>Mg(2+)</name>
        <dbReference type="ChEBI" id="CHEBI:18420"/>
        <label>1</label>
    </ligand>
</feature>
<feature type="binding site" evidence="1">
    <location>
        <position position="191"/>
    </location>
    <ligand>
        <name>Mg(2+)</name>
        <dbReference type="ChEBI" id="CHEBI:18420"/>
        <label>2</label>
    </ligand>
</feature>
<feature type="binding site" evidence="1">
    <location>
        <position position="195"/>
    </location>
    <ligand>
        <name>Mg(2+)</name>
        <dbReference type="ChEBI" id="CHEBI:18420"/>
        <label>1</label>
    </ligand>
</feature>
<feature type="binding site" evidence="1">
    <location>
        <position position="227"/>
    </location>
    <ligand>
        <name>Mg(2+)</name>
        <dbReference type="ChEBI" id="CHEBI:18420"/>
        <label>2</label>
    </ligand>
</feature>
<feature type="binding site" evidence="1">
    <location>
        <position position="231"/>
    </location>
    <ligand>
        <name>Mg(2+)</name>
        <dbReference type="ChEBI" id="CHEBI:18420"/>
        <label>2</label>
    </ligand>
</feature>
<feature type="binding site" evidence="1">
    <location>
        <position position="252"/>
    </location>
    <ligand>
        <name>substrate</name>
    </ligand>
</feature>
<proteinExistence type="inferred from homology"/>
<dbReference type="EC" id="1.1.1.86" evidence="1"/>
<dbReference type="EMBL" id="CP000927">
    <property type="protein sequence ID" value="ABZ72508.1"/>
    <property type="molecule type" value="Genomic_DNA"/>
</dbReference>
<dbReference type="SMR" id="B0T4Y1"/>
<dbReference type="STRING" id="366602.Caul_3381"/>
<dbReference type="KEGG" id="cak:Caul_3381"/>
<dbReference type="eggNOG" id="COG0059">
    <property type="taxonomic scope" value="Bacteria"/>
</dbReference>
<dbReference type="HOGENOM" id="CLU_033821_0_1_5"/>
<dbReference type="OrthoDB" id="9804088at2"/>
<dbReference type="UniPathway" id="UPA00047">
    <property type="reaction ID" value="UER00056"/>
</dbReference>
<dbReference type="UniPathway" id="UPA00049">
    <property type="reaction ID" value="UER00060"/>
</dbReference>
<dbReference type="GO" id="GO:0005829">
    <property type="term" value="C:cytosol"/>
    <property type="evidence" value="ECO:0007669"/>
    <property type="project" value="TreeGrafter"/>
</dbReference>
<dbReference type="GO" id="GO:0004455">
    <property type="term" value="F:ketol-acid reductoisomerase activity"/>
    <property type="evidence" value="ECO:0007669"/>
    <property type="project" value="UniProtKB-UniRule"/>
</dbReference>
<dbReference type="GO" id="GO:0000287">
    <property type="term" value="F:magnesium ion binding"/>
    <property type="evidence" value="ECO:0007669"/>
    <property type="project" value="UniProtKB-UniRule"/>
</dbReference>
<dbReference type="GO" id="GO:0050661">
    <property type="term" value="F:NADP binding"/>
    <property type="evidence" value="ECO:0007669"/>
    <property type="project" value="InterPro"/>
</dbReference>
<dbReference type="GO" id="GO:0009097">
    <property type="term" value="P:isoleucine biosynthetic process"/>
    <property type="evidence" value="ECO:0007669"/>
    <property type="project" value="UniProtKB-UniRule"/>
</dbReference>
<dbReference type="GO" id="GO:0009099">
    <property type="term" value="P:L-valine biosynthetic process"/>
    <property type="evidence" value="ECO:0007669"/>
    <property type="project" value="UniProtKB-UniRule"/>
</dbReference>
<dbReference type="FunFam" id="3.40.50.720:FF:000023">
    <property type="entry name" value="Ketol-acid reductoisomerase (NADP(+))"/>
    <property type="match status" value="1"/>
</dbReference>
<dbReference type="Gene3D" id="6.10.240.10">
    <property type="match status" value="1"/>
</dbReference>
<dbReference type="Gene3D" id="3.40.50.720">
    <property type="entry name" value="NAD(P)-binding Rossmann-like Domain"/>
    <property type="match status" value="1"/>
</dbReference>
<dbReference type="HAMAP" id="MF_00435">
    <property type="entry name" value="IlvC"/>
    <property type="match status" value="1"/>
</dbReference>
<dbReference type="InterPro" id="IPR008927">
    <property type="entry name" value="6-PGluconate_DH-like_C_sf"/>
</dbReference>
<dbReference type="InterPro" id="IPR013023">
    <property type="entry name" value="KARI"/>
</dbReference>
<dbReference type="InterPro" id="IPR000506">
    <property type="entry name" value="KARI_C"/>
</dbReference>
<dbReference type="InterPro" id="IPR013116">
    <property type="entry name" value="KARI_N"/>
</dbReference>
<dbReference type="InterPro" id="IPR014359">
    <property type="entry name" value="KARI_prok"/>
</dbReference>
<dbReference type="InterPro" id="IPR036291">
    <property type="entry name" value="NAD(P)-bd_dom_sf"/>
</dbReference>
<dbReference type="NCBIfam" id="TIGR00465">
    <property type="entry name" value="ilvC"/>
    <property type="match status" value="1"/>
</dbReference>
<dbReference type="NCBIfam" id="NF004017">
    <property type="entry name" value="PRK05479.1"/>
    <property type="match status" value="1"/>
</dbReference>
<dbReference type="NCBIfam" id="NF009940">
    <property type="entry name" value="PRK13403.1"/>
    <property type="match status" value="1"/>
</dbReference>
<dbReference type="PANTHER" id="PTHR21371">
    <property type="entry name" value="KETOL-ACID REDUCTOISOMERASE, MITOCHONDRIAL"/>
    <property type="match status" value="1"/>
</dbReference>
<dbReference type="PANTHER" id="PTHR21371:SF1">
    <property type="entry name" value="KETOL-ACID REDUCTOISOMERASE, MITOCHONDRIAL"/>
    <property type="match status" value="1"/>
</dbReference>
<dbReference type="Pfam" id="PF01450">
    <property type="entry name" value="KARI_C"/>
    <property type="match status" value="1"/>
</dbReference>
<dbReference type="Pfam" id="PF07991">
    <property type="entry name" value="KARI_N"/>
    <property type="match status" value="1"/>
</dbReference>
<dbReference type="PIRSF" id="PIRSF000116">
    <property type="entry name" value="IlvC_gammaproteo"/>
    <property type="match status" value="1"/>
</dbReference>
<dbReference type="SUPFAM" id="SSF48179">
    <property type="entry name" value="6-phosphogluconate dehydrogenase C-terminal domain-like"/>
    <property type="match status" value="1"/>
</dbReference>
<dbReference type="SUPFAM" id="SSF51735">
    <property type="entry name" value="NAD(P)-binding Rossmann-fold domains"/>
    <property type="match status" value="1"/>
</dbReference>
<dbReference type="PROSITE" id="PS51851">
    <property type="entry name" value="KARI_C"/>
    <property type="match status" value="1"/>
</dbReference>
<dbReference type="PROSITE" id="PS51850">
    <property type="entry name" value="KARI_N"/>
    <property type="match status" value="1"/>
</dbReference>
<organism>
    <name type="scientific">Caulobacter sp. (strain K31)</name>
    <dbReference type="NCBI Taxonomy" id="366602"/>
    <lineage>
        <taxon>Bacteria</taxon>
        <taxon>Pseudomonadati</taxon>
        <taxon>Pseudomonadota</taxon>
        <taxon>Alphaproteobacteria</taxon>
        <taxon>Caulobacterales</taxon>
        <taxon>Caulobacteraceae</taxon>
        <taxon>Caulobacter</taxon>
    </lineage>
</organism>
<comment type="function">
    <text evidence="1">Involved in the biosynthesis of branched-chain amino acids (BCAA). Catalyzes an alkyl-migration followed by a ketol-acid reduction of (S)-2-acetolactate (S2AL) to yield (R)-2,3-dihydroxy-isovalerate. In the isomerase reaction, S2AL is rearranged via a Mg-dependent methyl migration to produce 3-hydroxy-3-methyl-2-ketobutyrate (HMKB). In the reductase reaction, this 2-ketoacid undergoes a metal-dependent reduction by NADPH to yield (R)-2,3-dihydroxy-isovalerate.</text>
</comment>
<comment type="catalytic activity">
    <reaction evidence="1">
        <text>(2R)-2,3-dihydroxy-3-methylbutanoate + NADP(+) = (2S)-2-acetolactate + NADPH + H(+)</text>
        <dbReference type="Rhea" id="RHEA:22068"/>
        <dbReference type="ChEBI" id="CHEBI:15378"/>
        <dbReference type="ChEBI" id="CHEBI:49072"/>
        <dbReference type="ChEBI" id="CHEBI:57783"/>
        <dbReference type="ChEBI" id="CHEBI:58349"/>
        <dbReference type="ChEBI" id="CHEBI:58476"/>
        <dbReference type="EC" id="1.1.1.86"/>
    </reaction>
</comment>
<comment type="catalytic activity">
    <reaction evidence="1">
        <text>(2R,3R)-2,3-dihydroxy-3-methylpentanoate + NADP(+) = (S)-2-ethyl-2-hydroxy-3-oxobutanoate + NADPH + H(+)</text>
        <dbReference type="Rhea" id="RHEA:13493"/>
        <dbReference type="ChEBI" id="CHEBI:15378"/>
        <dbReference type="ChEBI" id="CHEBI:49256"/>
        <dbReference type="ChEBI" id="CHEBI:49258"/>
        <dbReference type="ChEBI" id="CHEBI:57783"/>
        <dbReference type="ChEBI" id="CHEBI:58349"/>
        <dbReference type="EC" id="1.1.1.86"/>
    </reaction>
</comment>
<comment type="cofactor">
    <cofactor evidence="1">
        <name>Mg(2+)</name>
        <dbReference type="ChEBI" id="CHEBI:18420"/>
    </cofactor>
    <text evidence="1">Binds 2 magnesium ions per subunit.</text>
</comment>
<comment type="pathway">
    <text evidence="1">Amino-acid biosynthesis; L-isoleucine biosynthesis; L-isoleucine from 2-oxobutanoate: step 2/4.</text>
</comment>
<comment type="pathway">
    <text evidence="1">Amino-acid biosynthesis; L-valine biosynthesis; L-valine from pyruvate: step 2/4.</text>
</comment>
<comment type="similarity">
    <text evidence="1">Belongs to the ketol-acid reductoisomerase family.</text>
</comment>